<reference key="1">
    <citation type="journal article" date="2005" name="Genetics">
        <title>Gene clusters for insecticidal loline alkaloids in the grass-endophytic fungus Neotyphodium uncinatum.</title>
        <authorList>
            <person name="Spiering M.J."/>
            <person name="Moon C.D."/>
            <person name="Wilkinson H.H."/>
            <person name="Schardl C.L."/>
        </authorList>
    </citation>
    <scope>NUCLEOTIDE SEQUENCE [GENOMIC DNA]</scope>
    <scope>INDUCTION</scope>
    <scope>FUNCTION</scope>
    <source>
        <strain>CBS 102646</strain>
    </source>
</reference>
<reference key="2">
    <citation type="journal article" date="2005" name="ChemBioChem">
        <title>Biosynthetic precursors of fungal pyrrolizidines, the loline alkaloids.</title>
        <authorList>
            <person name="Blankenship J.D."/>
            <person name="Houseknecht J.B."/>
            <person name="Pal S."/>
            <person name="Bush L.P."/>
            <person name="Grossman R.B."/>
            <person name="Schardl C.L."/>
        </authorList>
    </citation>
    <scope>FUNCTION</scope>
</reference>
<reference key="3">
    <citation type="journal article" date="2006" name="ChemBioChem">
        <title>On the sequence of bond formation in loline alkaloid biosynthesis.</title>
        <authorList>
            <person name="Faulkner J.R."/>
            <person name="Hussaini S.R."/>
            <person name="Blankenship J.D."/>
            <person name="Pal S."/>
            <person name="Branan B.M."/>
            <person name="Grossman R.B."/>
            <person name="Schardl C.L."/>
        </authorList>
    </citation>
    <scope>FUNCTION</scope>
</reference>
<reference key="4">
    <citation type="journal article" date="2008" name="Fungal Genet. Biol.">
        <title>Role of the LolP cytochrome P450 monooxygenase in loline alkaloid biosynthesis.</title>
        <authorList>
            <person name="Spiering M.J."/>
            <person name="Faulkner J.R."/>
            <person name="Zhang D.X."/>
            <person name="Machado C."/>
            <person name="Grossman R.B."/>
            <person name="Schardl C.L."/>
        </authorList>
    </citation>
    <scope>FUNCTION</scope>
    <source>
        <strain>CBS 102646</strain>
    </source>
</reference>
<reference key="5">
    <citation type="journal article" date="2014" name="Phytochemistry">
        <title>Ether bridge formation in loline alkaloid biosynthesis.</title>
        <authorList>
            <person name="Pan J."/>
            <person name="Bhardwaj M."/>
            <person name="Faulkner J.R."/>
            <person name="Nagabhyru P."/>
            <person name="Charlton N.D."/>
            <person name="Higashi R.M."/>
            <person name="Miller A.F."/>
            <person name="Young C.A."/>
            <person name="Grossman R.B."/>
            <person name="Schardl C.L."/>
        </authorList>
    </citation>
    <scope>FUNCTION</scope>
</reference>
<reference key="6">
    <citation type="journal article" date="2014" name="PLoS ONE">
        <title>Enzymes from fungal and plant origin required for chemical diversification of insecticidal loline alkaloids in grass-Epichloe symbiota.</title>
        <authorList>
            <person name="Pan J."/>
            <person name="Bhardwaj M."/>
            <person name="Nagabhyru P."/>
            <person name="Grossman R.B."/>
            <person name="Schardl C.L."/>
        </authorList>
    </citation>
    <scope>FUNCTION</scope>
    <scope>BIOTECHNOLOGY</scope>
</reference>
<reference key="7">
    <citation type="journal article" date="2018" name="Biochemistry">
        <title>Installation of the ether bridge of lolines by the iron- and 2-oxoglutarate-dependent oxygenase, lolO: regio- and stereochemistry of sequential hydroxylation and oxacyclization reactions.</title>
        <authorList>
            <person name="Pan J."/>
            <person name="Bhardwaj M."/>
            <person name="Zhang B."/>
            <person name="Chang W.C."/>
            <person name="Schardl C.L."/>
            <person name="Krebs C."/>
            <person name="Grossman R.B."/>
            <person name="Bollinger J.M. Jr."/>
        </authorList>
    </citation>
    <scope>FUNCTION</scope>
</reference>
<proteinExistence type="evidence at transcript level"/>
<sequence length="415" mass="45607">MTTVVREAFENHVKLVESRNSPGHVLASSEASFFVADLNDVVRKWAAWKEALPDVTPFFAVKSSYDRRLIQTLATCGAGFDCASTEEIELILSLGIGAERIIFTHPCKPVSSLGLCRKLGITLITFDNECELRKLHHHYPEAQTVLRVFADDPTNADPLGTKFGAARDDFDGLVRLVKELNMQLAGASFHAAPSVAVDAAAYVRGIRDTAEVFARARQVGLNPTVLDIGGGYTDSTFQQIAGAVRPAIAECFKSEVGEGRLRILAEPGTLFSCSPFYLAVKVVARRVNATAFGHEPATRLYINDGIYSNFMMRFIVNMTFSPAAVIREGVWHDQADHTMRGEACSLWGRSCDSNDCINRDCRLGPEVRVGDWLVFKDMGAYTTVCNTTFNGFTSSNHTIYLEPGTHPSRRSPVDL</sequence>
<evidence type="ECO:0000250" key="1">
    <source>
        <dbReference type="UniProtKB" id="P00860"/>
    </source>
</evidence>
<evidence type="ECO:0000250" key="2">
    <source>
        <dbReference type="UniProtKB" id="P07805"/>
    </source>
</evidence>
<evidence type="ECO:0000250" key="3">
    <source>
        <dbReference type="UniProtKB" id="P11926"/>
    </source>
</evidence>
<evidence type="ECO:0000269" key="4">
    <source>
    </source>
</evidence>
<evidence type="ECO:0000269" key="5">
    <source>
    </source>
</evidence>
<evidence type="ECO:0000269" key="6">
    <source>
    </source>
</evidence>
<evidence type="ECO:0000269" key="7">
    <source>
    </source>
</evidence>
<evidence type="ECO:0000269" key="8">
    <source>
    </source>
</evidence>
<evidence type="ECO:0000269" key="9">
    <source>
    </source>
</evidence>
<evidence type="ECO:0000269" key="10">
    <source>
    </source>
</evidence>
<evidence type="ECO:0000303" key="11">
    <source>
    </source>
</evidence>
<evidence type="ECO:0000303" key="12">
    <source>
    </source>
</evidence>
<evidence type="ECO:0000305" key="13"/>
<evidence type="ECO:0000305" key="14">
    <source>
    </source>
</evidence>
<evidence type="ECO:0000305" key="15">
    <source>
    </source>
</evidence>
<evidence type="ECO:0000305" key="16">
    <source>
    </source>
</evidence>
<accession>Q5MNH7</accession>
<gene>
    <name evidence="11" type="primary">lolD2</name>
    <name evidence="11" type="synonym">lolD</name>
</gene>
<feature type="chain" id="PRO_0000444348" description="Amino acid decarboxylase lolD2">
    <location>
        <begin position="1"/>
        <end position="415"/>
    </location>
</feature>
<feature type="active site" description="Proton donor; shared with dimeric partner" evidence="1">
    <location>
        <position position="351"/>
    </location>
</feature>
<feature type="binding site" evidence="3">
    <location>
        <position position="194"/>
    </location>
    <ligand>
        <name>pyridoxal 5'-phosphate</name>
        <dbReference type="ChEBI" id="CHEBI:597326"/>
    </ligand>
</feature>
<feature type="binding site" evidence="1">
    <location>
        <position position="231"/>
    </location>
    <ligand>
        <name>pyridoxal 5'-phosphate</name>
        <dbReference type="ChEBI" id="CHEBI:597326"/>
    </ligand>
</feature>
<feature type="binding site" evidence="1">
    <location>
        <begin position="266"/>
        <end position="269"/>
    </location>
    <ligand>
        <name>pyridoxal 5'-phosphate</name>
        <dbReference type="ChEBI" id="CHEBI:597326"/>
    </ligand>
</feature>
<feature type="binding site" description="in other chain" evidence="2">
    <location>
        <begin position="315"/>
        <end position="316"/>
    </location>
    <ligand>
        <name>substrate</name>
        <note>ligand shared between dimeric partners</note>
    </ligand>
</feature>
<feature type="binding site" evidence="2">
    <location>
        <position position="352"/>
    </location>
    <ligand>
        <name>substrate</name>
        <note>ligand shared between dimeric partners</note>
    </ligand>
</feature>
<feature type="binding site" evidence="1">
    <location>
        <position position="381"/>
    </location>
    <ligand>
        <name>pyridoxal 5'-phosphate</name>
        <dbReference type="ChEBI" id="CHEBI:597326"/>
    </ligand>
</feature>
<feature type="site" description="Stacks against the aromatic ring of pyridoxal phosphate and stabilizes reaction intermediates" evidence="1">
    <location>
        <position position="190"/>
    </location>
</feature>
<feature type="modified residue" description="N6-(pyridoxal phosphate)lysine" evidence="1">
    <location>
        <position position="62"/>
    </location>
</feature>
<feature type="modified residue" description="S-nitrosocysteine" evidence="3">
    <location>
        <position position="351"/>
    </location>
</feature>
<protein>
    <recommendedName>
        <fullName evidence="12">Amino acid decarboxylase lolD2</fullName>
        <ecNumber evidence="15">4.1.1.-</ecNumber>
    </recommendedName>
    <alternativeName>
        <fullName evidence="11">Loline biosynthesis cluster 2 protein D</fullName>
    </alternativeName>
</protein>
<name>LOLD2_EPIUN</name>
<comment type="function">
    <text evidence="4 5 6 7 8 9 10">Amino acid decarboxylase; part of the gene cluster that mediates the biosynthesis of loline alkaloids, potent insecticidal agents composed of a pyrrolizidine ring system and an uncommon ether bridge linking carbons 2 and 7 (PubMed:15654104). Lolines are structurally differentiated by the various modifications of the L-amino group and include norloline, loline, N-methylloline, N-acetylloline, N-acetylnorloline, and N-formylloline (PubMed:15861432, PubMed:25531527). The first committed step is the condensation of O-acetyl-L-homoserine (derived from L-aspartic acid) and L-proline, probably catalyzed by the gamma-type pyridoxal 5'-phosphate(PLP)-dependent enzyme lolC, to give the diamino diacid, NACPP (PubMed:15861432, PubMed:16755627). Ensuing cyclization, decarboxylation, and acetylation steps yield 1-exo-acetamidopyrrolizidine (AcAP) (PubMed:24374065). LolO is required for installation of the ether bridge upon the pathway intermediate, 1-exo-acetamidopyrrolizidine (AcAP) (PubMed:29537853). In sequential 2-oxoglutarate- and O(2)-consuming steps, lolO removes hydrogens from C2 and C7 of AcAP to form both carbon-oxygen bonds in N-acetylnorloline (NANL), the precursor to all other lolines (PubMed:24374065, PubMed:29537853). The enzymes lolD, lolE, lolF and lolT have also been proposed to be involved in the ether-bridge installation (PubMed:15654104). Further processing of the exocyclic moiety of NANL by fungal N-acetamidase (LolN), methyltransferase (LolM), and cytochrome P450 (LolP) enzymes, with occasional involvement of a plant acetyltransferase, generates the other known lolines (PubMed:18655839, PubMed:25531527). LolN transforms NANL to norlonine which is monomethylated and dimethylated to respectively lonine and N-methyllonine (NML) by lolM (PubMed:25531527). LolP catalyzes hydroxylation of the methyl group in N-methylloline (NML) and further oxygenation to N-formylloline (NFL) (PubMed:18655839). A plant acetyltransferase is responsible for the acetylation of loline to form N-acetylloline (NAL) (PubMed:25531527). LolA might interact with aspartate kinase to prevent feedback inhibition of its activity by these end products and thereby promote production of L-homoserine from L-aspartate (PubMed:15654104).</text>
</comment>
<comment type="cofactor">
    <cofactor evidence="1">
        <name>pyridoxal 5'-phosphate</name>
        <dbReference type="ChEBI" id="CHEBI:597326"/>
    </cofactor>
</comment>
<comment type="pathway">
    <text evidence="14">Alkaloid biosynthesis.</text>
</comment>
<comment type="subunit">
    <text evidence="1">Homodimer (By similarity).</text>
</comment>
<comment type="induction">
    <text evidence="4">Expression is induced in loline alkaloid-producing cultures as well as in planta (PubMed:15654104).</text>
</comment>
<comment type="biotechnology">
    <text evidence="16">Loline alkaloids show broad-spectrum anti-insect activity, and different lolines may have different biological activities (PubMed:25531527). In vitro tests of NFL, NAL, NML, and semisynthetic loline derivatives with long carbon-chain acylations on the 1-amine have shown that many are effective against both fall armyworm larvae and European corn borer larvae, but the effects seem to differ depending on the modifications (PubMed:25531527). N-Formylloline reduces the weight gain of fall armyworms by deterring feeding, and does not significantly affect corn borers (PubMed:25531527). In contrast, NAL reduces the weight gain of corn borer larvae without changing larval feeding behavior, indicating that its effect is due to metabolic toxicity. N-formylloline, NAL, and NML are almost as potent as nicotine in insecticidal activity against green bugs (PubMed:25531527).</text>
</comment>
<comment type="similarity">
    <text evidence="13">Belongs to the Orn/Lys/Arg decarboxylase class-II family.</text>
</comment>
<organism>
    <name type="scientific">Epichloe uncinata</name>
    <name type="common">Endophyte fungus</name>
    <name type="synonym">Neotyphodium uncinatum</name>
    <dbReference type="NCBI Taxonomy" id="5050"/>
    <lineage>
        <taxon>Eukaryota</taxon>
        <taxon>Fungi</taxon>
        <taxon>Dikarya</taxon>
        <taxon>Ascomycota</taxon>
        <taxon>Pezizomycotina</taxon>
        <taxon>Sordariomycetes</taxon>
        <taxon>Hypocreomycetidae</taxon>
        <taxon>Hypocreales</taxon>
        <taxon>Clavicipitaceae</taxon>
        <taxon>Epichloe</taxon>
    </lineage>
</organism>
<dbReference type="EC" id="4.1.1.-" evidence="15"/>
<dbReference type="EMBL" id="AY723750">
    <property type="protein sequence ID" value="AAV68696.1"/>
    <property type="molecule type" value="Genomic_DNA"/>
</dbReference>
<dbReference type="SMR" id="Q5MNH7"/>
<dbReference type="GO" id="GO:0005737">
    <property type="term" value="C:cytoplasm"/>
    <property type="evidence" value="ECO:0007669"/>
    <property type="project" value="TreeGrafter"/>
</dbReference>
<dbReference type="GO" id="GO:0004586">
    <property type="term" value="F:ornithine decarboxylase activity"/>
    <property type="evidence" value="ECO:0007669"/>
    <property type="project" value="TreeGrafter"/>
</dbReference>
<dbReference type="GO" id="GO:0009820">
    <property type="term" value="P:alkaloid metabolic process"/>
    <property type="evidence" value="ECO:0007669"/>
    <property type="project" value="UniProtKB-KW"/>
</dbReference>
<dbReference type="GO" id="GO:0033387">
    <property type="term" value="P:putrescine biosynthetic process from arginine, via ornithine"/>
    <property type="evidence" value="ECO:0007669"/>
    <property type="project" value="TreeGrafter"/>
</dbReference>
<dbReference type="CDD" id="cd00622">
    <property type="entry name" value="PLPDE_III_ODC"/>
    <property type="match status" value="1"/>
</dbReference>
<dbReference type="FunFam" id="3.20.20.10:FF:000005">
    <property type="entry name" value="Ornithine decarboxylase"/>
    <property type="match status" value="1"/>
</dbReference>
<dbReference type="Gene3D" id="3.20.20.10">
    <property type="entry name" value="Alanine racemase"/>
    <property type="match status" value="1"/>
</dbReference>
<dbReference type="Gene3D" id="2.40.37.10">
    <property type="entry name" value="Lyase, Ornithine Decarboxylase, Chain A, domain 1"/>
    <property type="match status" value="1"/>
</dbReference>
<dbReference type="InterPro" id="IPR009006">
    <property type="entry name" value="Ala_racemase/Decarboxylase_C"/>
</dbReference>
<dbReference type="InterPro" id="IPR022643">
    <property type="entry name" value="De-COase2_C"/>
</dbReference>
<dbReference type="InterPro" id="IPR022644">
    <property type="entry name" value="De-COase2_N"/>
</dbReference>
<dbReference type="InterPro" id="IPR000183">
    <property type="entry name" value="Orn/DAP/Arg_de-COase"/>
</dbReference>
<dbReference type="InterPro" id="IPR002433">
    <property type="entry name" value="Orn_de-COase"/>
</dbReference>
<dbReference type="InterPro" id="IPR029066">
    <property type="entry name" value="PLP-binding_barrel"/>
</dbReference>
<dbReference type="PANTHER" id="PTHR11482">
    <property type="entry name" value="ARGININE/DIAMINOPIMELATE/ORNITHINE DECARBOXYLASE"/>
    <property type="match status" value="1"/>
</dbReference>
<dbReference type="PANTHER" id="PTHR11482:SF6">
    <property type="entry name" value="ORNITHINE DECARBOXYLASE 1-RELATED"/>
    <property type="match status" value="1"/>
</dbReference>
<dbReference type="Pfam" id="PF02784">
    <property type="entry name" value="Orn_Arg_deC_N"/>
    <property type="match status" value="1"/>
</dbReference>
<dbReference type="Pfam" id="PF00278">
    <property type="entry name" value="Orn_DAP_Arg_deC"/>
    <property type="match status" value="1"/>
</dbReference>
<dbReference type="PRINTS" id="PR01179">
    <property type="entry name" value="ODADCRBXLASE"/>
</dbReference>
<dbReference type="PRINTS" id="PR01182">
    <property type="entry name" value="ORNDCRBXLASE"/>
</dbReference>
<dbReference type="SUPFAM" id="SSF50621">
    <property type="entry name" value="Alanine racemase C-terminal domain-like"/>
    <property type="match status" value="1"/>
</dbReference>
<dbReference type="SUPFAM" id="SSF51419">
    <property type="entry name" value="PLP-binding barrel"/>
    <property type="match status" value="1"/>
</dbReference>
<dbReference type="PROSITE" id="PS00879">
    <property type="entry name" value="ODR_DC_2_2"/>
    <property type="match status" value="1"/>
</dbReference>
<keyword id="KW-0017">Alkaloid metabolism</keyword>
<keyword id="KW-0210">Decarboxylase</keyword>
<keyword id="KW-0456">Lyase</keyword>
<keyword id="KW-0663">Pyridoxal phosphate</keyword>
<keyword id="KW-0702">S-nitrosylation</keyword>